<organism>
    <name type="scientific">Homo sapiens</name>
    <name type="common">Human</name>
    <dbReference type="NCBI Taxonomy" id="9606"/>
    <lineage>
        <taxon>Eukaryota</taxon>
        <taxon>Metazoa</taxon>
        <taxon>Chordata</taxon>
        <taxon>Craniata</taxon>
        <taxon>Vertebrata</taxon>
        <taxon>Euteleostomi</taxon>
        <taxon>Mammalia</taxon>
        <taxon>Eutheria</taxon>
        <taxon>Euarchontoglires</taxon>
        <taxon>Primates</taxon>
        <taxon>Haplorrhini</taxon>
        <taxon>Catarrhini</taxon>
        <taxon>Hominidae</taxon>
        <taxon>Homo</taxon>
    </lineage>
</organism>
<proteinExistence type="evidence at protein level"/>
<dbReference type="EMBL" id="U83461">
    <property type="protein sequence ID" value="AAB66307.1"/>
    <property type="molecule type" value="mRNA"/>
</dbReference>
<dbReference type="EMBL" id="BC026252">
    <property type="protein sequence ID" value="AAH26252.1"/>
    <property type="molecule type" value="mRNA"/>
</dbReference>
<dbReference type="CCDS" id="CCDS6788.1"/>
<dbReference type="RefSeq" id="NP_001851.1">
    <property type="nucleotide sequence ID" value="NM_001860.3"/>
</dbReference>
<dbReference type="SMR" id="O15432"/>
<dbReference type="BioGRID" id="107713">
    <property type="interactions" value="37"/>
</dbReference>
<dbReference type="FunCoup" id="O15432">
    <property type="interactions" value="145"/>
</dbReference>
<dbReference type="IntAct" id="O15432">
    <property type="interactions" value="29"/>
</dbReference>
<dbReference type="MINT" id="O15432"/>
<dbReference type="STRING" id="9606.ENSP00000259392"/>
<dbReference type="DrugBank" id="DB00958">
    <property type="generic name" value="Carboplatin"/>
</dbReference>
<dbReference type="DrugBank" id="DB00515">
    <property type="generic name" value="Cisplatin"/>
</dbReference>
<dbReference type="DrugBank" id="DB09130">
    <property type="generic name" value="Copper"/>
</dbReference>
<dbReference type="TCDB" id="1.A.56.1.9">
    <property type="family name" value="the copper transporter (ctr) family"/>
</dbReference>
<dbReference type="iPTMnet" id="O15432"/>
<dbReference type="PhosphoSitePlus" id="O15432"/>
<dbReference type="BioMuta" id="SLC31A2"/>
<dbReference type="MassIVE" id="O15432"/>
<dbReference type="PaxDb" id="9606-ENSP00000259392"/>
<dbReference type="PeptideAtlas" id="O15432"/>
<dbReference type="ProteomicsDB" id="48658"/>
<dbReference type="Antibodypedia" id="3100">
    <property type="antibodies" value="106 antibodies from 15 providers"/>
</dbReference>
<dbReference type="CPTC" id="O15432">
    <property type="antibodies" value="3 antibodies"/>
</dbReference>
<dbReference type="DNASU" id="1318"/>
<dbReference type="Ensembl" id="ENST00000259392.8">
    <property type="protein sequence ID" value="ENSP00000259392.3"/>
    <property type="gene ID" value="ENSG00000136867.11"/>
</dbReference>
<dbReference type="GeneID" id="1318"/>
<dbReference type="KEGG" id="hsa:1318"/>
<dbReference type="MANE-Select" id="ENST00000259392.8">
    <property type="protein sequence ID" value="ENSP00000259392.3"/>
    <property type="RefSeq nucleotide sequence ID" value="NM_001860.3"/>
    <property type="RefSeq protein sequence ID" value="NP_001851.1"/>
</dbReference>
<dbReference type="AGR" id="HGNC:11017"/>
<dbReference type="CTD" id="1318"/>
<dbReference type="DisGeNET" id="1318"/>
<dbReference type="GeneCards" id="SLC31A2"/>
<dbReference type="HGNC" id="HGNC:11017">
    <property type="gene designation" value="SLC31A2"/>
</dbReference>
<dbReference type="HPA" id="ENSG00000136867">
    <property type="expression patterns" value="Group enriched (parathyroid gland, salivary gland)"/>
</dbReference>
<dbReference type="MIM" id="603088">
    <property type="type" value="gene"/>
</dbReference>
<dbReference type="neXtProt" id="NX_O15432"/>
<dbReference type="OpenTargets" id="ENSG00000136867"/>
<dbReference type="PharmGKB" id="PA35886"/>
<dbReference type="VEuPathDB" id="HostDB:ENSG00000136867"/>
<dbReference type="eggNOG" id="KOG3386">
    <property type="taxonomic scope" value="Eukaryota"/>
</dbReference>
<dbReference type="GeneTree" id="ENSGT00940000159996"/>
<dbReference type="HOGENOM" id="CLU_079690_2_1_1"/>
<dbReference type="InParanoid" id="O15432"/>
<dbReference type="OMA" id="SYNIWIF"/>
<dbReference type="OrthoDB" id="73901at2759"/>
<dbReference type="PAN-GO" id="O15432">
    <property type="GO annotations" value="2 GO annotations based on evolutionary models"/>
</dbReference>
<dbReference type="PhylomeDB" id="O15432"/>
<dbReference type="TreeFam" id="TF315142"/>
<dbReference type="PathwayCommons" id="O15432"/>
<dbReference type="SignaLink" id="O15432"/>
<dbReference type="BioGRID-ORCS" id="1318">
    <property type="hits" value="22 hits in 1157 CRISPR screens"/>
</dbReference>
<dbReference type="GeneWiki" id="SLC31A2"/>
<dbReference type="GenomeRNAi" id="1318"/>
<dbReference type="Pharos" id="O15432">
    <property type="development level" value="Tbio"/>
</dbReference>
<dbReference type="PRO" id="PR:O15432"/>
<dbReference type="Proteomes" id="UP000005640">
    <property type="component" value="Chromosome 9"/>
</dbReference>
<dbReference type="RNAct" id="O15432">
    <property type="molecule type" value="protein"/>
</dbReference>
<dbReference type="Bgee" id="ENSG00000136867">
    <property type="expression patterns" value="Expressed in parotid gland and 194 other cell types or tissues"/>
</dbReference>
<dbReference type="ExpressionAtlas" id="O15432">
    <property type="expression patterns" value="baseline and differential"/>
</dbReference>
<dbReference type="GO" id="GO:0031902">
    <property type="term" value="C:late endosome membrane"/>
    <property type="evidence" value="ECO:0000314"/>
    <property type="project" value="UniProtKB"/>
</dbReference>
<dbReference type="GO" id="GO:0005765">
    <property type="term" value="C:lysosomal membrane"/>
    <property type="evidence" value="ECO:0000314"/>
    <property type="project" value="UniProtKB"/>
</dbReference>
<dbReference type="GO" id="GO:0005886">
    <property type="term" value="C:plasma membrane"/>
    <property type="evidence" value="ECO:0000314"/>
    <property type="project" value="UniProtKB"/>
</dbReference>
<dbReference type="GO" id="GO:0055037">
    <property type="term" value="C:recycling endosome"/>
    <property type="evidence" value="ECO:0007669"/>
    <property type="project" value="Ensembl"/>
</dbReference>
<dbReference type="GO" id="GO:0005375">
    <property type="term" value="F:copper ion transmembrane transporter activity"/>
    <property type="evidence" value="ECO:0000314"/>
    <property type="project" value="UniProtKB"/>
</dbReference>
<dbReference type="GO" id="GO:0015677">
    <property type="term" value="P:copper ion import"/>
    <property type="evidence" value="ECO:0000314"/>
    <property type="project" value="UniProtKB"/>
</dbReference>
<dbReference type="GO" id="GO:0006825">
    <property type="term" value="P:copper ion transport"/>
    <property type="evidence" value="ECO:0000314"/>
    <property type="project" value="UniProtKB"/>
</dbReference>
<dbReference type="GO" id="GO:0006878">
    <property type="term" value="P:intracellular copper ion homeostasis"/>
    <property type="evidence" value="ECO:0007669"/>
    <property type="project" value="Ensembl"/>
</dbReference>
<dbReference type="GO" id="GO:1902311">
    <property type="term" value="P:regulation of copper ion transmembrane transport"/>
    <property type="evidence" value="ECO:0007669"/>
    <property type="project" value="Ensembl"/>
</dbReference>
<dbReference type="InterPro" id="IPR007274">
    <property type="entry name" value="Cop_transporter"/>
</dbReference>
<dbReference type="PANTHER" id="PTHR12483:SF8">
    <property type="entry name" value="PROTEIN SLC31A2"/>
    <property type="match status" value="1"/>
</dbReference>
<dbReference type="PANTHER" id="PTHR12483">
    <property type="entry name" value="SOLUTE CARRIER FAMILY 31 COPPER TRANSPORTERS"/>
    <property type="match status" value="1"/>
</dbReference>
<dbReference type="Pfam" id="PF04145">
    <property type="entry name" value="Ctr"/>
    <property type="match status" value="1"/>
</dbReference>
<sequence>MAMHFIFSDTAVLLFDFWSVHSPAGMALSVLVLLLLAVLYEGIKVGKAKLLNQVLVNLPTSISQQTIAETDGDSAGSDSFPVGRTHHRWYLCHFGQSLIHVIQVVIGYFIMLAVMSYNTWIFLGVVLGSAVGYYLAYPLLSTA</sequence>
<evidence type="ECO:0000250" key="1">
    <source>
        <dbReference type="UniProtKB" id="Q9CPU9"/>
    </source>
</evidence>
<evidence type="ECO:0000255" key="2"/>
<evidence type="ECO:0000269" key="3">
    <source>
    </source>
</evidence>
<evidence type="ECO:0000269" key="4">
    <source>
    </source>
</evidence>
<evidence type="ECO:0000269" key="5">
    <source>
    </source>
</evidence>
<evidence type="ECO:0000269" key="6">
    <source>
    </source>
</evidence>
<evidence type="ECO:0000269" key="7">
    <source>
    </source>
</evidence>
<evidence type="ECO:0000303" key="8">
    <source>
    </source>
</evidence>
<evidence type="ECO:0000303" key="9">
    <source>
    </source>
</evidence>
<evidence type="ECO:0000305" key="10"/>
<evidence type="ECO:0000312" key="11">
    <source>
        <dbReference type="HGNC" id="HGNC:11017"/>
    </source>
</evidence>
<comment type="function">
    <text evidence="1 3 4">Does not function as a copper(1+) importer in vivo (By similarity). However, in vitro functions as a low-affinity copper(1+) importer (PubMed:17617060, PubMed:17944601). Regulator of SLC31A1 which facilitates the cleavage of the SLC31A1 ecto-domain or which stabilizes the truncated form of SLC31A1 (Truncated CTR1 form), thereby drives the SLC31A1 truncated form-dependent endosomal copper export and modulates the copper and cisplatin accumulation via SLC31A1 (By similarity).</text>
</comment>
<comment type="biophysicochemical properties">
    <kinetics>
        <KM evidence="4">11 uM for copper (in COS-7 cells transfected with human SLC31A1)</KM>
        <Vmax evidence="4">10.2 pmol/min/mg protein for copper (in COS-7 cells transfected with human SLC31A1)</Vmax>
    </kinetics>
</comment>
<comment type="subunit">
    <text evidence="3 5">Oligomer (PubMed:17617060). Interacts with SLC31A1; this interaction stabilizes SLC31A2 and protects it from ubiquitination and the subsequent degradation (PubMed:26205368).</text>
</comment>
<comment type="interaction">
    <interactant intactId="EBI-17867220">
        <id>O15432</id>
    </interactant>
    <interactant intactId="EBI-749464">
        <id>Q12983</id>
        <label>BNIP3</label>
    </interactant>
    <organismsDiffer>false</organismsDiffer>
    <experiments>3</experiments>
</comment>
<comment type="subcellular location">
    <subcellularLocation>
        <location evidence="4">Membrane</location>
        <topology evidence="2">Multi-pass membrane protein</topology>
    </subcellularLocation>
    <subcellularLocation>
        <location evidence="4">Cytoplasmic vesicle membrane</location>
        <topology evidence="2">Multi-pass membrane protein</topology>
    </subcellularLocation>
    <subcellularLocation>
        <location evidence="3">Late endosome membrane</location>
        <topology evidence="2">Multi-pass membrane protein</topology>
    </subcellularLocation>
    <subcellularLocation>
        <location evidence="3">Lysosome membrane</location>
        <topology evidence="2">Multi-pass membrane protein</topology>
    </subcellularLocation>
    <text evidence="4">Plasma membrane localization is partial.</text>
</comment>
<comment type="tissue specificity">
    <text evidence="4 7">Ubiquitous with high expression in placenta and heart.</text>
</comment>
<comment type="domain">
    <text evidence="6">The N-terminal domain may be involved in Cu(2+) acquisition from potential degradation products of proteins in the lysosome.</text>
</comment>
<comment type="PTM">
    <text evidence="5">Ubiquitinated; ubiquitination and the subsequent proteasomal degradation are prevent by SLC31A1 that stabilizes it.</text>
</comment>
<comment type="similarity">
    <text evidence="10">Belongs to the copper transporter (Ctr) (TC 1.A.56) family. SLC31A subfamily.</text>
</comment>
<accession>O15432</accession>
<protein>
    <recommendedName>
        <fullName evidence="10">Protein SLC31A2</fullName>
    </recommendedName>
    <alternativeName>
        <fullName evidence="9">Copper transporter 2</fullName>
        <shortName>hCTR2</shortName>
    </alternativeName>
    <alternativeName>
        <fullName>Solute carrier family 31 member 2</fullName>
    </alternativeName>
</protein>
<name>COPT2_HUMAN</name>
<keyword id="KW-0186">Copper</keyword>
<keyword id="KW-0187">Copper transport</keyword>
<keyword id="KW-0968">Cytoplasmic vesicle</keyword>
<keyword id="KW-0967">Endosome</keyword>
<keyword id="KW-0406">Ion transport</keyword>
<keyword id="KW-0458">Lysosome</keyword>
<keyword id="KW-0472">Membrane</keyword>
<keyword id="KW-0597">Phosphoprotein</keyword>
<keyword id="KW-1267">Proteomics identification</keyword>
<keyword id="KW-1185">Reference proteome</keyword>
<keyword id="KW-0812">Transmembrane</keyword>
<keyword id="KW-1133">Transmembrane helix</keyword>
<keyword id="KW-0813">Transport</keyword>
<keyword id="KW-0832">Ubl conjugation</keyword>
<reference key="1">
    <citation type="journal article" date="1997" name="Proc. Natl. Acad. Sci. U.S.A.">
        <title>hCTR1: a human gene for copper uptake identified by complementation in yeast.</title>
        <authorList>
            <person name="Zhou B."/>
            <person name="Gitschier J."/>
        </authorList>
    </citation>
    <scope>NUCLEOTIDE SEQUENCE [MRNA]</scope>
    <scope>TISSUE SPECIFICITY</scope>
</reference>
<reference key="2">
    <citation type="journal article" date="2004" name="Genome Res.">
        <title>The status, quality, and expansion of the NIH full-length cDNA project: the Mammalian Gene Collection (MGC).</title>
        <authorList>
            <consortium name="The MGC Project Team"/>
        </authorList>
    </citation>
    <scope>NUCLEOTIDE SEQUENCE [LARGE SCALE MRNA]</scope>
    <source>
        <tissue>Placenta</tissue>
    </source>
</reference>
<reference key="3">
    <citation type="journal article" date="2006" name="Cell">
        <title>Global, in vivo, and site-specific phosphorylation dynamics in signaling networks.</title>
        <authorList>
            <person name="Olsen J.V."/>
            <person name="Blagoev B."/>
            <person name="Gnad F."/>
            <person name="Macek B."/>
            <person name="Kumar C."/>
            <person name="Mortensen P."/>
            <person name="Mann M."/>
        </authorList>
    </citation>
    <scope>IDENTIFICATION BY MASS SPECTROMETRY [LARGE SCALE ANALYSIS]</scope>
    <source>
        <tissue>Cervix carcinoma</tissue>
    </source>
</reference>
<reference key="4">
    <citation type="journal article" date="2007" name="Biochem. J.">
        <title>Human copper transporter 2 is localized in late endosomes and lysosomes and facilitates cellular copper uptake.</title>
        <authorList>
            <person name="van den Berghe P.V."/>
            <person name="Folmer D.E."/>
            <person name="Malingre H.E."/>
            <person name="van Beurden E."/>
            <person name="Klomp A.E."/>
            <person name="van de Sluis B."/>
            <person name="Merkx M."/>
            <person name="Berger R."/>
            <person name="Klomp L.W."/>
        </authorList>
    </citation>
    <scope>FUNCTION</scope>
    <scope>SUBCELLULAR LOCATION</scope>
    <scope>SUBUNIT</scope>
</reference>
<reference key="5">
    <citation type="journal article" date="2008" name="Biochem. J.">
        <title>Ctr2 is partially localized to the plasma membrane and stimulates copper uptake in COS-7 cells.</title>
        <authorList>
            <person name="Bertinato J."/>
            <person name="Swist E."/>
            <person name="Plouffe L.J."/>
            <person name="Brooks S.P."/>
            <person name="L'abbe M.R."/>
        </authorList>
    </citation>
    <scope>FUNCTION</scope>
    <scope>BIOPHYSICOCHEMICAL PROPERTIES</scope>
    <scope>TISSUE SPECIFICITY</scope>
    <scope>SUBCELLULAR LOCATION</scope>
</reference>
<reference key="6">
    <citation type="journal article" date="2015" name="Metallomics">
        <title>The copper transporter 1 (CTR1) is required to maintain the stability of copper transporter 2 (CTR2).</title>
        <authorList>
            <person name="Tsai C.Y."/>
            <person name="Liebig J.K."/>
            <person name="Tsigelny I.F."/>
            <person name="Howell S.B."/>
        </authorList>
    </citation>
    <scope>INTERACTION WITH SLC31A1</scope>
    <scope>UBIQUITINATION</scope>
</reference>
<reference key="7">
    <citation type="journal article" date="2019" name="Inorg. Chem.">
        <title>Cu(II) Binding to the N-Terminal Model Peptide of the Human Ctr2 Transporter at Lysosomal and Extracellular pH.</title>
        <authorList>
            <person name="Wezynfeld N.E."/>
            <person name="Vileno B."/>
            <person name="Faller P."/>
        </authorList>
    </citation>
    <scope>DOMAIN</scope>
    <scope>MUTAGENESIS OF 1-MET--MET-3 AND HIS-4</scope>
</reference>
<feature type="chain" id="PRO_0000195043" description="Protein SLC31A2">
    <location>
        <begin position="1"/>
        <end position="143"/>
    </location>
</feature>
<feature type="topological domain" description="Extracellular" evidence="1">
    <location>
        <begin position="1"/>
        <end position="22"/>
    </location>
</feature>
<feature type="transmembrane region" description="Helical" evidence="2">
    <location>
        <begin position="23"/>
        <end position="43"/>
    </location>
</feature>
<feature type="topological domain" description="Cytoplasmic" evidence="1">
    <location>
        <begin position="44"/>
        <end position="93"/>
    </location>
</feature>
<feature type="transmembrane region" description="Helical" evidence="2">
    <location>
        <begin position="94"/>
        <end position="114"/>
    </location>
</feature>
<feature type="topological domain" description="Extracellular" evidence="1">
    <location>
        <begin position="115"/>
        <end position="119"/>
    </location>
</feature>
<feature type="transmembrane region" description="Helical" evidence="2">
    <location>
        <begin position="120"/>
        <end position="140"/>
    </location>
</feature>
<feature type="topological domain" description="Cytoplasmic" evidence="1">
    <location>
        <begin position="141"/>
        <end position="143"/>
    </location>
</feature>
<feature type="modified residue" description="Phosphoserine" evidence="1">
    <location>
        <position position="77"/>
    </location>
</feature>
<feature type="mutagenesis site" description="Slightly decreases Cu(2+) affinity at pH 7.4. Decreases about 3 times the Cu(2+) affinity at pH 7.4 compared to wild-type." evidence="6">
    <original>MAM</original>
    <variation>AAA</variation>
    <location>
        <begin position="1"/>
        <end position="3"/>
    </location>
</feature>
<feature type="mutagenesis site" description="Decreases almost 7 times the Cu(2+) affinity at pH 7.4 compared to wild-type. Decreases almost 10 times the Cu(2+) affinity at pH 7.4 compared to wild-type." evidence="6">
    <original>H</original>
    <variation>A</variation>
    <location>
        <position position="4"/>
    </location>
</feature>
<gene>
    <name evidence="11" type="primary">SLC31A2</name>
    <name type="synonym">COPT2</name>
    <name evidence="8" type="synonym">CTR2</name>
</gene>